<comment type="function">
    <text evidence="1">Part of the ABC transporter complex CysAWTP involved in sulfate/thiosulfate import. Responsible for energy coupling to the transport system.</text>
</comment>
<comment type="catalytic activity">
    <reaction evidence="1">
        <text>sulfate(out) + ATP + H2O = sulfate(in) + ADP + phosphate + H(+)</text>
        <dbReference type="Rhea" id="RHEA:10192"/>
        <dbReference type="ChEBI" id="CHEBI:15377"/>
        <dbReference type="ChEBI" id="CHEBI:15378"/>
        <dbReference type="ChEBI" id="CHEBI:16189"/>
        <dbReference type="ChEBI" id="CHEBI:30616"/>
        <dbReference type="ChEBI" id="CHEBI:43474"/>
        <dbReference type="ChEBI" id="CHEBI:456216"/>
        <dbReference type="EC" id="7.3.2.3"/>
    </reaction>
</comment>
<comment type="catalytic activity">
    <reaction evidence="1">
        <text>thiosulfate(out) + ATP + H2O = thiosulfate(in) + ADP + phosphate + H(+)</text>
        <dbReference type="Rhea" id="RHEA:29871"/>
        <dbReference type="ChEBI" id="CHEBI:15377"/>
        <dbReference type="ChEBI" id="CHEBI:15378"/>
        <dbReference type="ChEBI" id="CHEBI:30616"/>
        <dbReference type="ChEBI" id="CHEBI:33542"/>
        <dbReference type="ChEBI" id="CHEBI:43474"/>
        <dbReference type="ChEBI" id="CHEBI:456216"/>
        <dbReference type="EC" id="7.3.2.3"/>
    </reaction>
</comment>
<comment type="subunit">
    <text evidence="1">The complex is composed of two ATP-binding proteins (CysA), two transmembrane proteins (CysT and CysW) and a solute-binding protein (CysP).</text>
</comment>
<comment type="subcellular location">
    <subcellularLocation>
        <location evidence="1">Cell inner membrane</location>
        <topology evidence="1">Peripheral membrane protein</topology>
    </subcellularLocation>
</comment>
<comment type="similarity">
    <text evidence="1">Belongs to the ABC transporter superfamily. Sulfate/tungstate importer (TC 3.A.1.6) family.</text>
</comment>
<gene>
    <name evidence="1" type="primary">cysA</name>
    <name type="ordered locus">BPP1658</name>
</gene>
<name>CYSA_BORPA</name>
<proteinExistence type="inferred from homology"/>
<feature type="chain" id="PRO_0000092254" description="Sulfate/thiosulfate import ATP-binding protein CysA">
    <location>
        <begin position="1"/>
        <end position="354"/>
    </location>
</feature>
<feature type="domain" description="ABC transporter" evidence="1">
    <location>
        <begin position="3"/>
        <end position="237"/>
    </location>
</feature>
<feature type="binding site" evidence="1">
    <location>
        <begin position="35"/>
        <end position="42"/>
    </location>
    <ligand>
        <name>ATP</name>
        <dbReference type="ChEBI" id="CHEBI:30616"/>
    </ligand>
</feature>
<organism>
    <name type="scientific">Bordetella parapertussis (strain 12822 / ATCC BAA-587 / NCTC 13253)</name>
    <dbReference type="NCBI Taxonomy" id="257311"/>
    <lineage>
        <taxon>Bacteria</taxon>
        <taxon>Pseudomonadati</taxon>
        <taxon>Pseudomonadota</taxon>
        <taxon>Betaproteobacteria</taxon>
        <taxon>Burkholderiales</taxon>
        <taxon>Alcaligenaceae</taxon>
        <taxon>Bordetella</taxon>
    </lineage>
</organism>
<sequence length="354" mass="39265">MSIEVRGLSKRFGAFRALDEVSLHIETGELVALLGPSGCGKTTLLRIIAGLESADAGSVLFAGEDATEVDVRQRQVGFVFQHYALFKHMTVFENVAFGLRVRHRSQRPSEARIRAKVLDLLGLVQLDWLADRYPAQLSGGQRQRIALARALAVEPRVLLLDEPFGALDAKVRKELRRWLRRLHDELHVASVFVTHDQEEALEVADRVVLMNAGRIEQVGSPREVWERPATPFVYGFLGDVNQLHGHATRGVWRLGEVALPAPDLPEADNQRAIAYVRPHDIDLARAGTAAPGIPVRLNHVYLAGPSAYLELARQDDQAIIEAQVPEPLFRSLGLKEGEALLAQPRRARVFAVQP</sequence>
<protein>
    <recommendedName>
        <fullName evidence="1">Sulfate/thiosulfate import ATP-binding protein CysA</fullName>
        <ecNumber evidence="1">7.3.2.3</ecNumber>
    </recommendedName>
    <alternativeName>
        <fullName evidence="1">Sulfate-transporting ATPase</fullName>
    </alternativeName>
</protein>
<evidence type="ECO:0000255" key="1">
    <source>
        <dbReference type="HAMAP-Rule" id="MF_01701"/>
    </source>
</evidence>
<accession>Q7W9U5</accession>
<keyword id="KW-0067">ATP-binding</keyword>
<keyword id="KW-0997">Cell inner membrane</keyword>
<keyword id="KW-1003">Cell membrane</keyword>
<keyword id="KW-0472">Membrane</keyword>
<keyword id="KW-0547">Nucleotide-binding</keyword>
<keyword id="KW-0764">Sulfate transport</keyword>
<keyword id="KW-1278">Translocase</keyword>
<keyword id="KW-0813">Transport</keyword>
<reference key="1">
    <citation type="journal article" date="2003" name="Nat. Genet.">
        <title>Comparative analysis of the genome sequences of Bordetella pertussis, Bordetella parapertussis and Bordetella bronchiseptica.</title>
        <authorList>
            <person name="Parkhill J."/>
            <person name="Sebaihia M."/>
            <person name="Preston A."/>
            <person name="Murphy L.D."/>
            <person name="Thomson N.R."/>
            <person name="Harris D.E."/>
            <person name="Holden M.T.G."/>
            <person name="Churcher C.M."/>
            <person name="Bentley S.D."/>
            <person name="Mungall K.L."/>
            <person name="Cerdeno-Tarraga A.-M."/>
            <person name="Temple L."/>
            <person name="James K.D."/>
            <person name="Harris B."/>
            <person name="Quail M.A."/>
            <person name="Achtman M."/>
            <person name="Atkin R."/>
            <person name="Baker S."/>
            <person name="Basham D."/>
            <person name="Bason N."/>
            <person name="Cherevach I."/>
            <person name="Chillingworth T."/>
            <person name="Collins M."/>
            <person name="Cronin A."/>
            <person name="Davis P."/>
            <person name="Doggett J."/>
            <person name="Feltwell T."/>
            <person name="Goble A."/>
            <person name="Hamlin N."/>
            <person name="Hauser H."/>
            <person name="Holroyd S."/>
            <person name="Jagels K."/>
            <person name="Leather S."/>
            <person name="Moule S."/>
            <person name="Norberczak H."/>
            <person name="O'Neil S."/>
            <person name="Ormond D."/>
            <person name="Price C."/>
            <person name="Rabbinowitsch E."/>
            <person name="Rutter S."/>
            <person name="Sanders M."/>
            <person name="Saunders D."/>
            <person name="Seeger K."/>
            <person name="Sharp S."/>
            <person name="Simmonds M."/>
            <person name="Skelton J."/>
            <person name="Squares R."/>
            <person name="Squares S."/>
            <person name="Stevens K."/>
            <person name="Unwin L."/>
            <person name="Whitehead S."/>
            <person name="Barrell B.G."/>
            <person name="Maskell D.J."/>
        </authorList>
    </citation>
    <scope>NUCLEOTIDE SEQUENCE [LARGE SCALE GENOMIC DNA]</scope>
    <source>
        <strain>12822 / ATCC BAA-587 / NCTC 13253</strain>
    </source>
</reference>
<dbReference type="EC" id="7.3.2.3" evidence="1"/>
<dbReference type="EMBL" id="BX640428">
    <property type="protein sequence ID" value="CAE36959.1"/>
    <property type="molecule type" value="Genomic_DNA"/>
</dbReference>
<dbReference type="RefSeq" id="WP_003821532.1">
    <property type="nucleotide sequence ID" value="NC_002928.3"/>
</dbReference>
<dbReference type="SMR" id="Q7W9U5"/>
<dbReference type="KEGG" id="bpa:BPP1658"/>
<dbReference type="HOGENOM" id="CLU_000604_1_1_4"/>
<dbReference type="Proteomes" id="UP000001421">
    <property type="component" value="Chromosome"/>
</dbReference>
<dbReference type="GO" id="GO:0043190">
    <property type="term" value="C:ATP-binding cassette (ABC) transporter complex"/>
    <property type="evidence" value="ECO:0007669"/>
    <property type="project" value="InterPro"/>
</dbReference>
<dbReference type="GO" id="GO:0015419">
    <property type="term" value="F:ABC-type sulfate transporter activity"/>
    <property type="evidence" value="ECO:0007669"/>
    <property type="project" value="InterPro"/>
</dbReference>
<dbReference type="GO" id="GO:0102025">
    <property type="term" value="F:ABC-type thiosulfate transporter activity"/>
    <property type="evidence" value="ECO:0007669"/>
    <property type="project" value="RHEA"/>
</dbReference>
<dbReference type="GO" id="GO:0005524">
    <property type="term" value="F:ATP binding"/>
    <property type="evidence" value="ECO:0007669"/>
    <property type="project" value="UniProtKB-KW"/>
</dbReference>
<dbReference type="GO" id="GO:0016887">
    <property type="term" value="F:ATP hydrolysis activity"/>
    <property type="evidence" value="ECO:0007669"/>
    <property type="project" value="InterPro"/>
</dbReference>
<dbReference type="CDD" id="cd03296">
    <property type="entry name" value="ABC_CysA_sulfate_importer"/>
    <property type="match status" value="1"/>
</dbReference>
<dbReference type="FunFam" id="3.40.50.300:FF:000227">
    <property type="entry name" value="Sulfate/thiosulfate import ATP-binding protein CysA"/>
    <property type="match status" value="1"/>
</dbReference>
<dbReference type="Gene3D" id="3.40.50.300">
    <property type="entry name" value="P-loop containing nucleotide triphosphate hydrolases"/>
    <property type="match status" value="1"/>
</dbReference>
<dbReference type="InterPro" id="IPR003593">
    <property type="entry name" value="AAA+_ATPase"/>
</dbReference>
<dbReference type="InterPro" id="IPR050093">
    <property type="entry name" value="ABC_SmlMolc_Importer"/>
</dbReference>
<dbReference type="InterPro" id="IPR003439">
    <property type="entry name" value="ABC_transporter-like_ATP-bd"/>
</dbReference>
<dbReference type="InterPro" id="IPR017871">
    <property type="entry name" value="ABC_transporter-like_CS"/>
</dbReference>
<dbReference type="InterPro" id="IPR041193">
    <property type="entry name" value="CysA_C"/>
</dbReference>
<dbReference type="InterPro" id="IPR008995">
    <property type="entry name" value="Mo/tungstate-bd_C_term_dom"/>
</dbReference>
<dbReference type="InterPro" id="IPR027417">
    <property type="entry name" value="P-loop_NTPase"/>
</dbReference>
<dbReference type="InterPro" id="IPR005666">
    <property type="entry name" value="Sulph_transpt1"/>
</dbReference>
<dbReference type="InterPro" id="IPR024765">
    <property type="entry name" value="TOBE-like"/>
</dbReference>
<dbReference type="NCBIfam" id="TIGR00968">
    <property type="entry name" value="3a0106s01"/>
    <property type="match status" value="1"/>
</dbReference>
<dbReference type="PANTHER" id="PTHR42781">
    <property type="entry name" value="SPERMIDINE/PUTRESCINE IMPORT ATP-BINDING PROTEIN POTA"/>
    <property type="match status" value="1"/>
</dbReference>
<dbReference type="PANTHER" id="PTHR42781:SF4">
    <property type="entry name" value="SPERMIDINE_PUTRESCINE IMPORT ATP-BINDING PROTEIN POTA"/>
    <property type="match status" value="1"/>
</dbReference>
<dbReference type="Pfam" id="PF00005">
    <property type="entry name" value="ABC_tran"/>
    <property type="match status" value="1"/>
</dbReference>
<dbReference type="Pfam" id="PF17850">
    <property type="entry name" value="CysA_C_terminal"/>
    <property type="match status" value="1"/>
</dbReference>
<dbReference type="Pfam" id="PF12857">
    <property type="entry name" value="TOBE_3"/>
    <property type="match status" value="1"/>
</dbReference>
<dbReference type="SMART" id="SM00382">
    <property type="entry name" value="AAA"/>
    <property type="match status" value="1"/>
</dbReference>
<dbReference type="SUPFAM" id="SSF50331">
    <property type="entry name" value="MOP-like"/>
    <property type="match status" value="1"/>
</dbReference>
<dbReference type="SUPFAM" id="SSF52540">
    <property type="entry name" value="P-loop containing nucleoside triphosphate hydrolases"/>
    <property type="match status" value="1"/>
</dbReference>
<dbReference type="PROSITE" id="PS00211">
    <property type="entry name" value="ABC_TRANSPORTER_1"/>
    <property type="match status" value="1"/>
</dbReference>
<dbReference type="PROSITE" id="PS50893">
    <property type="entry name" value="ABC_TRANSPORTER_2"/>
    <property type="match status" value="1"/>
</dbReference>
<dbReference type="PROSITE" id="PS51237">
    <property type="entry name" value="CYSA"/>
    <property type="match status" value="1"/>
</dbReference>